<sequence length="413" mass="43634">MNVPHPHRPSLWLNARLATMDPAHGAPYGALEGHALLLRDGHIEAVLPQAEADAAAFDGEVFDLQGRWVTPGFVDCHTHLVYGGSRAAEWEKRLTGVPYQQIAAEGGGIVSTVRATRWLDEEELALASLPRLKALMAEGVTTVEIKSGYGLTLADELKQLAAARRLQASLPVEVATTLLAAHAVPPEYAGDADGYVDLVVESILPVAARAGLAEAVDAFCESVGFSPAQTRRVFEAARAHGLKVKGHVEQLSNLHGAELVAEFGGLSADHIEYLDDAGVAALKRAGTVAVLLPGAFYFLRETQKPPVDKLRAAGVPMAVSTDLNPGTSPFASIRLAMNQACVLFGLTPEEALAGVTRHAAQALGRGATHGRLAAGCVADLLVWDIAHPAELAYSVGVPLLKQRVFRGAAQHID</sequence>
<gene>
    <name evidence="1" type="primary">hutI</name>
    <name type="ordered locus">CV_0321</name>
</gene>
<accession>Q7P192</accession>
<dbReference type="EC" id="3.5.2.7" evidence="1"/>
<dbReference type="EMBL" id="AE016825">
    <property type="protein sequence ID" value="AAQ58000.1"/>
    <property type="molecule type" value="Genomic_DNA"/>
</dbReference>
<dbReference type="RefSeq" id="WP_011133876.1">
    <property type="nucleotide sequence ID" value="NC_005085.1"/>
</dbReference>
<dbReference type="SMR" id="Q7P192"/>
<dbReference type="STRING" id="243365.CV_0321"/>
<dbReference type="KEGG" id="cvi:CV_0321"/>
<dbReference type="eggNOG" id="COG1228">
    <property type="taxonomic scope" value="Bacteria"/>
</dbReference>
<dbReference type="HOGENOM" id="CLU_041647_0_0_4"/>
<dbReference type="OrthoDB" id="9807210at2"/>
<dbReference type="UniPathway" id="UPA00379">
    <property type="reaction ID" value="UER00551"/>
</dbReference>
<dbReference type="Proteomes" id="UP000001424">
    <property type="component" value="Chromosome"/>
</dbReference>
<dbReference type="GO" id="GO:0005737">
    <property type="term" value="C:cytoplasm"/>
    <property type="evidence" value="ECO:0007669"/>
    <property type="project" value="UniProtKB-SubCell"/>
</dbReference>
<dbReference type="GO" id="GO:0050480">
    <property type="term" value="F:imidazolonepropionase activity"/>
    <property type="evidence" value="ECO:0007669"/>
    <property type="project" value="UniProtKB-UniRule"/>
</dbReference>
<dbReference type="GO" id="GO:0005506">
    <property type="term" value="F:iron ion binding"/>
    <property type="evidence" value="ECO:0007669"/>
    <property type="project" value="UniProtKB-UniRule"/>
</dbReference>
<dbReference type="GO" id="GO:0008270">
    <property type="term" value="F:zinc ion binding"/>
    <property type="evidence" value="ECO:0007669"/>
    <property type="project" value="UniProtKB-UniRule"/>
</dbReference>
<dbReference type="GO" id="GO:0019556">
    <property type="term" value="P:L-histidine catabolic process to glutamate and formamide"/>
    <property type="evidence" value="ECO:0007669"/>
    <property type="project" value="UniProtKB-UniPathway"/>
</dbReference>
<dbReference type="GO" id="GO:0019557">
    <property type="term" value="P:L-histidine catabolic process to glutamate and formate"/>
    <property type="evidence" value="ECO:0007669"/>
    <property type="project" value="UniProtKB-UniPathway"/>
</dbReference>
<dbReference type="CDD" id="cd01296">
    <property type="entry name" value="Imidazolone-5PH"/>
    <property type="match status" value="1"/>
</dbReference>
<dbReference type="FunFam" id="3.20.20.140:FF:000007">
    <property type="entry name" value="Imidazolonepropionase"/>
    <property type="match status" value="1"/>
</dbReference>
<dbReference type="Gene3D" id="3.20.20.140">
    <property type="entry name" value="Metal-dependent hydrolases"/>
    <property type="match status" value="1"/>
</dbReference>
<dbReference type="Gene3D" id="2.30.40.10">
    <property type="entry name" value="Urease, subunit C, domain 1"/>
    <property type="match status" value="1"/>
</dbReference>
<dbReference type="HAMAP" id="MF_00372">
    <property type="entry name" value="HutI"/>
    <property type="match status" value="1"/>
</dbReference>
<dbReference type="InterPro" id="IPR006680">
    <property type="entry name" value="Amidohydro-rel"/>
</dbReference>
<dbReference type="InterPro" id="IPR005920">
    <property type="entry name" value="HutI"/>
</dbReference>
<dbReference type="InterPro" id="IPR011059">
    <property type="entry name" value="Metal-dep_hydrolase_composite"/>
</dbReference>
<dbReference type="InterPro" id="IPR032466">
    <property type="entry name" value="Metal_Hydrolase"/>
</dbReference>
<dbReference type="NCBIfam" id="TIGR01224">
    <property type="entry name" value="hutI"/>
    <property type="match status" value="1"/>
</dbReference>
<dbReference type="PANTHER" id="PTHR42752">
    <property type="entry name" value="IMIDAZOLONEPROPIONASE"/>
    <property type="match status" value="1"/>
</dbReference>
<dbReference type="PANTHER" id="PTHR42752:SF1">
    <property type="entry name" value="IMIDAZOLONEPROPIONASE-RELATED"/>
    <property type="match status" value="1"/>
</dbReference>
<dbReference type="Pfam" id="PF01979">
    <property type="entry name" value="Amidohydro_1"/>
    <property type="match status" value="1"/>
</dbReference>
<dbReference type="SUPFAM" id="SSF51338">
    <property type="entry name" value="Composite domain of metallo-dependent hydrolases"/>
    <property type="match status" value="1"/>
</dbReference>
<dbReference type="SUPFAM" id="SSF51556">
    <property type="entry name" value="Metallo-dependent hydrolases"/>
    <property type="match status" value="1"/>
</dbReference>
<protein>
    <recommendedName>
        <fullName evidence="1">Imidazolonepropionase</fullName>
        <ecNumber evidence="1">3.5.2.7</ecNumber>
    </recommendedName>
    <alternativeName>
        <fullName evidence="1">Imidazolone-5-propionate hydrolase</fullName>
    </alternativeName>
</protein>
<organism>
    <name type="scientific">Chromobacterium violaceum (strain ATCC 12472 / DSM 30191 / JCM 1249 / CCUG 213 / NBRC 12614 / NCIMB 9131 / NCTC 9757 / MK)</name>
    <dbReference type="NCBI Taxonomy" id="243365"/>
    <lineage>
        <taxon>Bacteria</taxon>
        <taxon>Pseudomonadati</taxon>
        <taxon>Pseudomonadota</taxon>
        <taxon>Betaproteobacteria</taxon>
        <taxon>Neisseriales</taxon>
        <taxon>Chromobacteriaceae</taxon>
        <taxon>Chromobacterium</taxon>
    </lineage>
</organism>
<name>HUTI_CHRVO</name>
<feature type="chain" id="PRO_0000306456" description="Imidazolonepropionase">
    <location>
        <begin position="1"/>
        <end position="413"/>
    </location>
</feature>
<feature type="binding site" evidence="1">
    <location>
        <position position="77"/>
    </location>
    <ligand>
        <name>Fe(3+)</name>
        <dbReference type="ChEBI" id="CHEBI:29034"/>
    </ligand>
</feature>
<feature type="binding site" evidence="1">
    <location>
        <position position="77"/>
    </location>
    <ligand>
        <name>Zn(2+)</name>
        <dbReference type="ChEBI" id="CHEBI:29105"/>
    </ligand>
</feature>
<feature type="binding site" evidence="1">
    <location>
        <position position="79"/>
    </location>
    <ligand>
        <name>Fe(3+)</name>
        <dbReference type="ChEBI" id="CHEBI:29034"/>
    </ligand>
</feature>
<feature type="binding site" evidence="1">
    <location>
        <position position="79"/>
    </location>
    <ligand>
        <name>Zn(2+)</name>
        <dbReference type="ChEBI" id="CHEBI:29105"/>
    </ligand>
</feature>
<feature type="binding site" evidence="1">
    <location>
        <position position="86"/>
    </location>
    <ligand>
        <name>4-imidazolone-5-propanoate</name>
        <dbReference type="ChEBI" id="CHEBI:77893"/>
    </ligand>
</feature>
<feature type="binding site" evidence="1">
    <location>
        <position position="149"/>
    </location>
    <ligand>
        <name>4-imidazolone-5-propanoate</name>
        <dbReference type="ChEBI" id="CHEBI:77893"/>
    </ligand>
</feature>
<feature type="binding site" evidence="1">
    <location>
        <position position="149"/>
    </location>
    <ligand>
        <name>N-formimidoyl-L-glutamate</name>
        <dbReference type="ChEBI" id="CHEBI:58928"/>
    </ligand>
</feature>
<feature type="binding site" evidence="1">
    <location>
        <position position="182"/>
    </location>
    <ligand>
        <name>4-imidazolone-5-propanoate</name>
        <dbReference type="ChEBI" id="CHEBI:77893"/>
    </ligand>
</feature>
<feature type="binding site" evidence="1">
    <location>
        <position position="247"/>
    </location>
    <ligand>
        <name>Fe(3+)</name>
        <dbReference type="ChEBI" id="CHEBI:29034"/>
    </ligand>
</feature>
<feature type="binding site" evidence="1">
    <location>
        <position position="247"/>
    </location>
    <ligand>
        <name>Zn(2+)</name>
        <dbReference type="ChEBI" id="CHEBI:29105"/>
    </ligand>
</feature>
<feature type="binding site" evidence="1">
    <location>
        <position position="250"/>
    </location>
    <ligand>
        <name>4-imidazolone-5-propanoate</name>
        <dbReference type="ChEBI" id="CHEBI:77893"/>
    </ligand>
</feature>
<feature type="binding site" evidence="1">
    <location>
        <position position="322"/>
    </location>
    <ligand>
        <name>Fe(3+)</name>
        <dbReference type="ChEBI" id="CHEBI:29034"/>
    </ligand>
</feature>
<feature type="binding site" evidence="1">
    <location>
        <position position="322"/>
    </location>
    <ligand>
        <name>Zn(2+)</name>
        <dbReference type="ChEBI" id="CHEBI:29105"/>
    </ligand>
</feature>
<feature type="binding site" evidence="1">
    <location>
        <position position="324"/>
    </location>
    <ligand>
        <name>N-formimidoyl-L-glutamate</name>
        <dbReference type="ChEBI" id="CHEBI:58928"/>
    </ligand>
</feature>
<feature type="binding site" evidence="1">
    <location>
        <position position="326"/>
    </location>
    <ligand>
        <name>N-formimidoyl-L-glutamate</name>
        <dbReference type="ChEBI" id="CHEBI:58928"/>
    </ligand>
</feature>
<feature type="binding site" evidence="1">
    <location>
        <position position="327"/>
    </location>
    <ligand>
        <name>4-imidazolone-5-propanoate</name>
        <dbReference type="ChEBI" id="CHEBI:77893"/>
    </ligand>
</feature>
<proteinExistence type="inferred from homology"/>
<comment type="function">
    <text evidence="1">Catalyzes the hydrolytic cleavage of the carbon-nitrogen bond in imidazolone-5-propanoate to yield N-formimidoyl-L-glutamate. It is the third step in the universal histidine degradation pathway.</text>
</comment>
<comment type="catalytic activity">
    <reaction evidence="1">
        <text>4-imidazolone-5-propanoate + H2O = N-formimidoyl-L-glutamate</text>
        <dbReference type="Rhea" id="RHEA:23660"/>
        <dbReference type="ChEBI" id="CHEBI:15377"/>
        <dbReference type="ChEBI" id="CHEBI:58928"/>
        <dbReference type="ChEBI" id="CHEBI:77893"/>
        <dbReference type="EC" id="3.5.2.7"/>
    </reaction>
</comment>
<comment type="cofactor">
    <cofactor evidence="1">
        <name>Zn(2+)</name>
        <dbReference type="ChEBI" id="CHEBI:29105"/>
    </cofactor>
    <cofactor evidence="1">
        <name>Fe(3+)</name>
        <dbReference type="ChEBI" id="CHEBI:29034"/>
    </cofactor>
    <text evidence="1">Binds 1 zinc or iron ion per subunit.</text>
</comment>
<comment type="pathway">
    <text evidence="1">Amino-acid degradation; L-histidine degradation into L-glutamate; N-formimidoyl-L-glutamate from L-histidine: step 3/3.</text>
</comment>
<comment type="subcellular location">
    <subcellularLocation>
        <location evidence="1">Cytoplasm</location>
    </subcellularLocation>
</comment>
<comment type="similarity">
    <text evidence="1">Belongs to the metallo-dependent hydrolases superfamily. HutI family.</text>
</comment>
<evidence type="ECO:0000255" key="1">
    <source>
        <dbReference type="HAMAP-Rule" id="MF_00372"/>
    </source>
</evidence>
<keyword id="KW-0963">Cytoplasm</keyword>
<keyword id="KW-0369">Histidine metabolism</keyword>
<keyword id="KW-0378">Hydrolase</keyword>
<keyword id="KW-0408">Iron</keyword>
<keyword id="KW-0479">Metal-binding</keyword>
<keyword id="KW-1185">Reference proteome</keyword>
<keyword id="KW-0862">Zinc</keyword>
<reference key="1">
    <citation type="journal article" date="2003" name="Proc. Natl. Acad. Sci. U.S.A.">
        <title>The complete genome sequence of Chromobacterium violaceum reveals remarkable and exploitable bacterial adaptability.</title>
        <authorList>
            <person name="Vasconcelos A.T.R."/>
            <person name="de Almeida D.F."/>
            <person name="Hungria M."/>
            <person name="Guimaraes C.T."/>
            <person name="Antonio R.V."/>
            <person name="Almeida F.C."/>
            <person name="de Almeida L.G.P."/>
            <person name="de Almeida R."/>
            <person name="Alves-Gomes J.A."/>
            <person name="Andrade E.M."/>
            <person name="Araripe J."/>
            <person name="de Araujo M.F.F."/>
            <person name="Astolfi-Filho S."/>
            <person name="Azevedo V."/>
            <person name="Baptista A.J."/>
            <person name="Bataus L.A.M."/>
            <person name="Batista J.S."/>
            <person name="Belo A."/>
            <person name="van den Berg C."/>
            <person name="Bogo M."/>
            <person name="Bonatto S."/>
            <person name="Bordignon J."/>
            <person name="Brigido M.M."/>
            <person name="Brito C.A."/>
            <person name="Brocchi M."/>
            <person name="Burity H.A."/>
            <person name="Camargo A.A."/>
            <person name="Cardoso D.D.P."/>
            <person name="Carneiro N.P."/>
            <person name="Carraro D.M."/>
            <person name="Carvalho C.M.B."/>
            <person name="Cascardo J.C.M."/>
            <person name="Cavada B.S."/>
            <person name="Chueire L.M.O."/>
            <person name="Creczynski-Pasa T.B."/>
            <person name="Cunha-Junior N.C."/>
            <person name="Fagundes N."/>
            <person name="Falcao C.L."/>
            <person name="Fantinatti F."/>
            <person name="Farias I.P."/>
            <person name="Felipe M.S.S."/>
            <person name="Ferrari L.P."/>
            <person name="Ferro J.A."/>
            <person name="Ferro M.I.T."/>
            <person name="Franco G.R."/>
            <person name="Freitas N.S.A."/>
            <person name="Furlan L.R."/>
            <person name="Gazzinelli R.T."/>
            <person name="Gomes E.A."/>
            <person name="Goncalves P.R."/>
            <person name="Grangeiro T.B."/>
            <person name="Grattapaglia D."/>
            <person name="Grisard E.C."/>
            <person name="Hanna E.S."/>
            <person name="Jardim S.N."/>
            <person name="Laurino J."/>
            <person name="Leoi L.C.T."/>
            <person name="Lima L.F.A."/>
            <person name="Loureiro M.F."/>
            <person name="Lyra M.C.C.P."/>
            <person name="Madeira H.M.F."/>
            <person name="Manfio G.P."/>
            <person name="Maranhao A.Q."/>
            <person name="Martins W.S."/>
            <person name="di Mauro S.M.Z."/>
            <person name="de Medeiros S.R.B."/>
            <person name="Meissner R.V."/>
            <person name="Moreira M.A.M."/>
            <person name="Nascimento F.F."/>
            <person name="Nicolas M.F."/>
            <person name="Oliveira J.G."/>
            <person name="Oliveira S.C."/>
            <person name="Paixao R.F.C."/>
            <person name="Parente J.A."/>
            <person name="Pedrosa F.O."/>
            <person name="Pena S.D.J."/>
            <person name="Pereira J.O."/>
            <person name="Pereira M."/>
            <person name="Pinto L.S.R.C."/>
            <person name="Pinto L.S."/>
            <person name="Porto J.I.R."/>
            <person name="Potrich D.P."/>
            <person name="Ramalho-Neto C.E."/>
            <person name="Reis A.M.M."/>
            <person name="Rigo L.U."/>
            <person name="Rondinelli E."/>
            <person name="Santos E.B.P."/>
            <person name="Santos F.R."/>
            <person name="Schneider M.P.C."/>
            <person name="Seuanez H.N."/>
            <person name="Silva A.M.R."/>
            <person name="da Silva A.L.C."/>
            <person name="Silva D.W."/>
            <person name="Silva R."/>
            <person name="Simoes I.C."/>
            <person name="Simon D."/>
            <person name="Soares C.M.A."/>
            <person name="Soares R.B.A."/>
            <person name="Souza E.M."/>
            <person name="Souza K.R.L."/>
            <person name="Souza R.C."/>
            <person name="Steffens M.B.R."/>
            <person name="Steindel M."/>
            <person name="Teixeira S.R."/>
            <person name="Urmenyi T."/>
            <person name="Vettore A."/>
            <person name="Wassem R."/>
            <person name="Zaha A."/>
            <person name="Simpson A.J.G."/>
        </authorList>
    </citation>
    <scope>NUCLEOTIDE SEQUENCE [LARGE SCALE GENOMIC DNA]</scope>
    <source>
        <strain>ATCC 12472 / DSM 30191 / JCM 1249 / CCUG 213 / NBRC 12614 / NCIMB 9131 / NCTC 9757 / MK</strain>
    </source>
</reference>